<protein>
    <recommendedName>
        <fullName>Zinc finger protein 250</fullName>
    </recommendedName>
    <alternativeName>
        <fullName>Zinc finger protein 647</fullName>
    </alternativeName>
</protein>
<feature type="chain" id="PRO_0000047484" description="Zinc finger protein 250">
    <location>
        <begin position="1"/>
        <end position="535"/>
    </location>
</feature>
<feature type="domain" description="KRAB" evidence="3">
    <location>
        <begin position="17"/>
        <end position="88"/>
    </location>
</feature>
<feature type="zinc finger region" description="C2H2-type 1" evidence="2">
    <location>
        <begin position="174"/>
        <end position="196"/>
    </location>
</feature>
<feature type="zinc finger region" description="C2H2-type 2" evidence="2">
    <location>
        <begin position="202"/>
        <end position="224"/>
    </location>
</feature>
<feature type="zinc finger region" description="C2H2-type 3" evidence="2">
    <location>
        <begin position="230"/>
        <end position="252"/>
    </location>
</feature>
<feature type="zinc finger region" description="C2H2-type 4" evidence="2">
    <location>
        <begin position="258"/>
        <end position="280"/>
    </location>
</feature>
<feature type="zinc finger region" description="C2H2-type 5" evidence="2">
    <location>
        <begin position="286"/>
        <end position="308"/>
    </location>
</feature>
<feature type="zinc finger region" description="C2H2-type 6" evidence="2">
    <location>
        <begin position="314"/>
        <end position="336"/>
    </location>
</feature>
<feature type="zinc finger region" description="C2H2-type 7" evidence="2">
    <location>
        <begin position="342"/>
        <end position="364"/>
    </location>
</feature>
<feature type="zinc finger region" description="C2H2-type 8" evidence="2">
    <location>
        <begin position="370"/>
        <end position="392"/>
    </location>
</feature>
<feature type="zinc finger region" description="C2H2-type 9" evidence="2">
    <location>
        <begin position="398"/>
        <end position="420"/>
    </location>
</feature>
<feature type="zinc finger region" description="C2H2-type 10" evidence="2">
    <location>
        <begin position="426"/>
        <end position="448"/>
    </location>
</feature>
<feature type="zinc finger region" description="C2H2-type 11" evidence="2">
    <location>
        <begin position="454"/>
        <end position="476"/>
    </location>
</feature>
<feature type="zinc finger region" description="C2H2-type 12" evidence="2">
    <location>
        <begin position="482"/>
        <end position="504"/>
    </location>
</feature>
<feature type="zinc finger region" description="C2H2-type 13" evidence="2">
    <location>
        <begin position="510"/>
        <end position="532"/>
    </location>
</feature>
<feature type="cross-link" description="Glycyl lysine isopeptide (Lys-Gly) (interchain with G-Cter in SUMO2)" evidence="1">
    <location>
        <position position="99"/>
    </location>
</feature>
<feature type="cross-link" description="Glycyl lysine isopeptide (Lys-Gly) (interchain with G-Cter in SUMO2)" evidence="1">
    <location>
        <position position="200"/>
    </location>
</feature>
<feature type="cross-link" description="Glycyl lysine isopeptide (Lys-Gly) (interchain with G-Cter in SUMO2)" evidence="1">
    <location>
        <position position="396"/>
    </location>
</feature>
<feature type="sequence conflict" description="In Ref. 1; BAC27443." evidence="4" ref="1">
    <original>E</original>
    <variation>A</variation>
    <location>
        <position position="171"/>
    </location>
</feature>
<feature type="sequence conflict" description="In Ref. 1; BAC27443." evidence="4" ref="1">
    <original>K</original>
    <variation>E</variation>
    <location>
        <position position="326"/>
    </location>
</feature>
<organism>
    <name type="scientific">Mus musculus</name>
    <name type="common">Mouse</name>
    <dbReference type="NCBI Taxonomy" id="10090"/>
    <lineage>
        <taxon>Eukaryota</taxon>
        <taxon>Metazoa</taxon>
        <taxon>Chordata</taxon>
        <taxon>Craniata</taxon>
        <taxon>Vertebrata</taxon>
        <taxon>Euteleostomi</taxon>
        <taxon>Mammalia</taxon>
        <taxon>Eutheria</taxon>
        <taxon>Euarchontoglires</taxon>
        <taxon>Glires</taxon>
        <taxon>Rodentia</taxon>
        <taxon>Myomorpha</taxon>
        <taxon>Muroidea</taxon>
        <taxon>Muridae</taxon>
        <taxon>Murinae</taxon>
        <taxon>Mus</taxon>
        <taxon>Mus</taxon>
    </lineage>
</organism>
<comment type="function">
    <text>May be involved in transcriptional regulation.</text>
</comment>
<comment type="subcellular location">
    <subcellularLocation>
        <location evidence="4">Nucleus</location>
    </subcellularLocation>
</comment>
<comment type="similarity">
    <text evidence="4">Belongs to the krueppel C2H2-type zinc-finger protein family.</text>
</comment>
<evidence type="ECO:0000250" key="1">
    <source>
        <dbReference type="UniProtKB" id="P15622"/>
    </source>
</evidence>
<evidence type="ECO:0000255" key="2">
    <source>
        <dbReference type="PROSITE-ProRule" id="PRU00042"/>
    </source>
</evidence>
<evidence type="ECO:0000255" key="3">
    <source>
        <dbReference type="PROSITE-ProRule" id="PRU00119"/>
    </source>
</evidence>
<evidence type="ECO:0000305" key="4"/>
<gene>
    <name type="primary">Znf250</name>
    <name type="synonym">Zfp647</name>
    <name type="synonym">Znf647</name>
</gene>
<accession>Q7TNU6</accession>
<accession>Q8BJ57</accession>
<keyword id="KW-0238">DNA-binding</keyword>
<keyword id="KW-1017">Isopeptide bond</keyword>
<keyword id="KW-0479">Metal-binding</keyword>
<keyword id="KW-0539">Nucleus</keyword>
<keyword id="KW-1185">Reference proteome</keyword>
<keyword id="KW-0677">Repeat</keyword>
<keyword id="KW-0804">Transcription</keyword>
<keyword id="KW-0805">Transcription regulation</keyword>
<keyword id="KW-0832">Ubl conjugation</keyword>
<keyword id="KW-0862">Zinc</keyword>
<keyword id="KW-0863">Zinc-finger</keyword>
<name>ZN250_MOUSE</name>
<reference key="1">
    <citation type="journal article" date="2005" name="Science">
        <title>The transcriptional landscape of the mammalian genome.</title>
        <authorList>
            <person name="Carninci P."/>
            <person name="Kasukawa T."/>
            <person name="Katayama S."/>
            <person name="Gough J."/>
            <person name="Frith M.C."/>
            <person name="Maeda N."/>
            <person name="Oyama R."/>
            <person name="Ravasi T."/>
            <person name="Lenhard B."/>
            <person name="Wells C."/>
            <person name="Kodzius R."/>
            <person name="Shimokawa K."/>
            <person name="Bajic V.B."/>
            <person name="Brenner S.E."/>
            <person name="Batalov S."/>
            <person name="Forrest A.R."/>
            <person name="Zavolan M."/>
            <person name="Davis M.J."/>
            <person name="Wilming L.G."/>
            <person name="Aidinis V."/>
            <person name="Allen J.E."/>
            <person name="Ambesi-Impiombato A."/>
            <person name="Apweiler R."/>
            <person name="Aturaliya R.N."/>
            <person name="Bailey T.L."/>
            <person name="Bansal M."/>
            <person name="Baxter L."/>
            <person name="Beisel K.W."/>
            <person name="Bersano T."/>
            <person name="Bono H."/>
            <person name="Chalk A.M."/>
            <person name="Chiu K.P."/>
            <person name="Choudhary V."/>
            <person name="Christoffels A."/>
            <person name="Clutterbuck D.R."/>
            <person name="Crowe M.L."/>
            <person name="Dalla E."/>
            <person name="Dalrymple B.P."/>
            <person name="de Bono B."/>
            <person name="Della Gatta G."/>
            <person name="di Bernardo D."/>
            <person name="Down T."/>
            <person name="Engstrom P."/>
            <person name="Fagiolini M."/>
            <person name="Faulkner G."/>
            <person name="Fletcher C.F."/>
            <person name="Fukushima T."/>
            <person name="Furuno M."/>
            <person name="Futaki S."/>
            <person name="Gariboldi M."/>
            <person name="Georgii-Hemming P."/>
            <person name="Gingeras T.R."/>
            <person name="Gojobori T."/>
            <person name="Green R.E."/>
            <person name="Gustincich S."/>
            <person name="Harbers M."/>
            <person name="Hayashi Y."/>
            <person name="Hensch T.K."/>
            <person name="Hirokawa N."/>
            <person name="Hill D."/>
            <person name="Huminiecki L."/>
            <person name="Iacono M."/>
            <person name="Ikeo K."/>
            <person name="Iwama A."/>
            <person name="Ishikawa T."/>
            <person name="Jakt M."/>
            <person name="Kanapin A."/>
            <person name="Katoh M."/>
            <person name="Kawasawa Y."/>
            <person name="Kelso J."/>
            <person name="Kitamura H."/>
            <person name="Kitano H."/>
            <person name="Kollias G."/>
            <person name="Krishnan S.P."/>
            <person name="Kruger A."/>
            <person name="Kummerfeld S.K."/>
            <person name="Kurochkin I.V."/>
            <person name="Lareau L.F."/>
            <person name="Lazarevic D."/>
            <person name="Lipovich L."/>
            <person name="Liu J."/>
            <person name="Liuni S."/>
            <person name="McWilliam S."/>
            <person name="Madan Babu M."/>
            <person name="Madera M."/>
            <person name="Marchionni L."/>
            <person name="Matsuda H."/>
            <person name="Matsuzawa S."/>
            <person name="Miki H."/>
            <person name="Mignone F."/>
            <person name="Miyake S."/>
            <person name="Morris K."/>
            <person name="Mottagui-Tabar S."/>
            <person name="Mulder N."/>
            <person name="Nakano N."/>
            <person name="Nakauchi H."/>
            <person name="Ng P."/>
            <person name="Nilsson R."/>
            <person name="Nishiguchi S."/>
            <person name="Nishikawa S."/>
            <person name="Nori F."/>
            <person name="Ohara O."/>
            <person name="Okazaki Y."/>
            <person name="Orlando V."/>
            <person name="Pang K.C."/>
            <person name="Pavan W.J."/>
            <person name="Pavesi G."/>
            <person name="Pesole G."/>
            <person name="Petrovsky N."/>
            <person name="Piazza S."/>
            <person name="Reed J."/>
            <person name="Reid J.F."/>
            <person name="Ring B.Z."/>
            <person name="Ringwald M."/>
            <person name="Rost B."/>
            <person name="Ruan Y."/>
            <person name="Salzberg S.L."/>
            <person name="Sandelin A."/>
            <person name="Schneider C."/>
            <person name="Schoenbach C."/>
            <person name="Sekiguchi K."/>
            <person name="Semple C.A."/>
            <person name="Seno S."/>
            <person name="Sessa L."/>
            <person name="Sheng Y."/>
            <person name="Shibata Y."/>
            <person name="Shimada H."/>
            <person name="Shimada K."/>
            <person name="Silva D."/>
            <person name="Sinclair B."/>
            <person name="Sperling S."/>
            <person name="Stupka E."/>
            <person name="Sugiura K."/>
            <person name="Sultana R."/>
            <person name="Takenaka Y."/>
            <person name="Taki K."/>
            <person name="Tammoja K."/>
            <person name="Tan S.L."/>
            <person name="Tang S."/>
            <person name="Taylor M.S."/>
            <person name="Tegner J."/>
            <person name="Teichmann S.A."/>
            <person name="Ueda H.R."/>
            <person name="van Nimwegen E."/>
            <person name="Verardo R."/>
            <person name="Wei C.L."/>
            <person name="Yagi K."/>
            <person name="Yamanishi H."/>
            <person name="Zabarovsky E."/>
            <person name="Zhu S."/>
            <person name="Zimmer A."/>
            <person name="Hide W."/>
            <person name="Bult C."/>
            <person name="Grimmond S.M."/>
            <person name="Teasdale R.D."/>
            <person name="Liu E.T."/>
            <person name="Brusic V."/>
            <person name="Quackenbush J."/>
            <person name="Wahlestedt C."/>
            <person name="Mattick J.S."/>
            <person name="Hume D.A."/>
            <person name="Kai C."/>
            <person name="Sasaki D."/>
            <person name="Tomaru Y."/>
            <person name="Fukuda S."/>
            <person name="Kanamori-Katayama M."/>
            <person name="Suzuki M."/>
            <person name="Aoki J."/>
            <person name="Arakawa T."/>
            <person name="Iida J."/>
            <person name="Imamura K."/>
            <person name="Itoh M."/>
            <person name="Kato T."/>
            <person name="Kawaji H."/>
            <person name="Kawagashira N."/>
            <person name="Kawashima T."/>
            <person name="Kojima M."/>
            <person name="Kondo S."/>
            <person name="Konno H."/>
            <person name="Nakano K."/>
            <person name="Ninomiya N."/>
            <person name="Nishio T."/>
            <person name="Okada M."/>
            <person name="Plessy C."/>
            <person name="Shibata K."/>
            <person name="Shiraki T."/>
            <person name="Suzuki S."/>
            <person name="Tagami M."/>
            <person name="Waki K."/>
            <person name="Watahiki A."/>
            <person name="Okamura-Oho Y."/>
            <person name="Suzuki H."/>
            <person name="Kawai J."/>
            <person name="Hayashizaki Y."/>
        </authorList>
    </citation>
    <scope>NUCLEOTIDE SEQUENCE [LARGE SCALE MRNA]</scope>
    <source>
        <strain>C57BL/6J</strain>
        <tissue>Embryonic testis</tissue>
    </source>
</reference>
<reference key="2">
    <citation type="journal article" date="2004" name="Genome Res.">
        <title>The status, quality, and expansion of the NIH full-length cDNA project: the Mammalian Gene Collection (MGC).</title>
        <authorList>
            <consortium name="The MGC Project Team"/>
        </authorList>
    </citation>
    <scope>NUCLEOTIDE SEQUENCE [LARGE SCALE MRNA]</scope>
    <source>
        <strain>C57BL/6J</strain>
        <tissue>Brain</tissue>
    </source>
</reference>
<dbReference type="EMBL" id="AK031543">
    <property type="protein sequence ID" value="BAC27443.1"/>
    <property type="molecule type" value="mRNA"/>
</dbReference>
<dbReference type="EMBL" id="BC055686">
    <property type="protein sequence ID" value="AAH55686.1"/>
    <property type="molecule type" value="mRNA"/>
</dbReference>
<dbReference type="CCDS" id="CCDS27596.1"/>
<dbReference type="RefSeq" id="NP_001161748.1">
    <property type="nucleotide sequence ID" value="NM_001168276.1"/>
</dbReference>
<dbReference type="RefSeq" id="NP_766405.2">
    <property type="nucleotide sequence ID" value="NM_172817.3"/>
</dbReference>
<dbReference type="RefSeq" id="XP_006520991.1">
    <property type="nucleotide sequence ID" value="XM_006520928.3"/>
</dbReference>
<dbReference type="RefSeq" id="XP_006520992.1">
    <property type="nucleotide sequence ID" value="XM_006520929.3"/>
</dbReference>
<dbReference type="RefSeq" id="XP_011243919.1">
    <property type="nucleotide sequence ID" value="XM_011245617.2"/>
</dbReference>
<dbReference type="SMR" id="Q7TNU6"/>
<dbReference type="STRING" id="10090.ENSMUSP00000155685"/>
<dbReference type="iPTMnet" id="Q7TNU6"/>
<dbReference type="PhosphoSitePlus" id="Q7TNU6"/>
<dbReference type="PaxDb" id="10090-ENSMUSP00000041575"/>
<dbReference type="ProteomicsDB" id="275068"/>
<dbReference type="Antibodypedia" id="15013">
    <property type="antibodies" value="11 antibodies from 9 providers"/>
</dbReference>
<dbReference type="DNASU" id="239546"/>
<dbReference type="Ensembl" id="ENSMUST00000048854.8">
    <property type="protein sequence ID" value="ENSMUSP00000041575.8"/>
    <property type="gene ID" value="ENSMUSG00000054967.8"/>
</dbReference>
<dbReference type="Ensembl" id="ENSMUST00000229055.2">
    <property type="protein sequence ID" value="ENSMUSP00000155685.2"/>
    <property type="gene ID" value="ENSMUSG00000054967.8"/>
</dbReference>
<dbReference type="GeneID" id="239546"/>
<dbReference type="KEGG" id="mmu:239546"/>
<dbReference type="UCSC" id="uc007wmu.2">
    <property type="organism name" value="mouse"/>
</dbReference>
<dbReference type="AGR" id="MGI:3052806"/>
<dbReference type="CTD" id="239546"/>
<dbReference type="MGI" id="MGI:3052806">
    <property type="gene designation" value="Zfp647"/>
</dbReference>
<dbReference type="VEuPathDB" id="HostDB:ENSMUSG00000054967"/>
<dbReference type="eggNOG" id="KOG1721">
    <property type="taxonomic scope" value="Eukaryota"/>
</dbReference>
<dbReference type="GeneTree" id="ENSGT00940000162306"/>
<dbReference type="HOGENOM" id="CLU_002678_0_5_1"/>
<dbReference type="InParanoid" id="Q7TNU6"/>
<dbReference type="OMA" id="CPWECEN"/>
<dbReference type="OrthoDB" id="9411774at2759"/>
<dbReference type="PhylomeDB" id="Q7TNU6"/>
<dbReference type="TreeFam" id="TF341817"/>
<dbReference type="Reactome" id="R-MMU-212436">
    <property type="pathway name" value="Generic Transcription Pathway"/>
</dbReference>
<dbReference type="BioGRID-ORCS" id="239546">
    <property type="hits" value="1 hit in 77 CRISPR screens"/>
</dbReference>
<dbReference type="ChiTaRS" id="Zfp647">
    <property type="organism name" value="mouse"/>
</dbReference>
<dbReference type="PRO" id="PR:Q7TNU6"/>
<dbReference type="Proteomes" id="UP000000589">
    <property type="component" value="Chromosome 15"/>
</dbReference>
<dbReference type="RNAct" id="Q7TNU6">
    <property type="molecule type" value="protein"/>
</dbReference>
<dbReference type="Bgee" id="ENSMUSG00000054967">
    <property type="expression patterns" value="Expressed in manus and 218 other cell types or tissues"/>
</dbReference>
<dbReference type="ExpressionAtlas" id="Q7TNU6">
    <property type="expression patterns" value="baseline and differential"/>
</dbReference>
<dbReference type="GO" id="GO:0005634">
    <property type="term" value="C:nucleus"/>
    <property type="evidence" value="ECO:0007669"/>
    <property type="project" value="UniProtKB-SubCell"/>
</dbReference>
<dbReference type="GO" id="GO:1990837">
    <property type="term" value="F:sequence-specific double-stranded DNA binding"/>
    <property type="evidence" value="ECO:0007669"/>
    <property type="project" value="Ensembl"/>
</dbReference>
<dbReference type="GO" id="GO:0008270">
    <property type="term" value="F:zinc ion binding"/>
    <property type="evidence" value="ECO:0007669"/>
    <property type="project" value="UniProtKB-KW"/>
</dbReference>
<dbReference type="GO" id="GO:0006355">
    <property type="term" value="P:regulation of DNA-templated transcription"/>
    <property type="evidence" value="ECO:0007669"/>
    <property type="project" value="InterPro"/>
</dbReference>
<dbReference type="CDD" id="cd07765">
    <property type="entry name" value="KRAB_A-box"/>
    <property type="match status" value="1"/>
</dbReference>
<dbReference type="FunFam" id="3.30.160.60:FF:000029">
    <property type="entry name" value="GLI family zinc finger 4"/>
    <property type="match status" value="1"/>
</dbReference>
<dbReference type="FunFam" id="3.30.160.60:FF:000557">
    <property type="entry name" value="zinc finger and SCAN domain-containing protein 29"/>
    <property type="match status" value="1"/>
</dbReference>
<dbReference type="FunFam" id="3.30.160.60:FF:000555">
    <property type="entry name" value="Zinc finger protein 1 homolog"/>
    <property type="match status" value="1"/>
</dbReference>
<dbReference type="FunFam" id="3.30.160.60:FF:000198">
    <property type="entry name" value="zinc finger protein 10 isoform X1"/>
    <property type="match status" value="1"/>
</dbReference>
<dbReference type="FunFam" id="3.30.160.60:FF:000478">
    <property type="entry name" value="Zinc finger protein 133"/>
    <property type="match status" value="1"/>
</dbReference>
<dbReference type="FunFam" id="3.30.160.60:FF:000914">
    <property type="entry name" value="Zinc finger protein 16"/>
    <property type="match status" value="1"/>
</dbReference>
<dbReference type="FunFam" id="3.30.160.60:FF:000635">
    <property type="entry name" value="zinc finger protein 250 isoform X2"/>
    <property type="match status" value="1"/>
</dbReference>
<dbReference type="FunFam" id="3.30.160.60:FF:000987">
    <property type="entry name" value="Zinc finger protein 275"/>
    <property type="match status" value="1"/>
</dbReference>
<dbReference type="FunFam" id="3.30.160.60:FF:002343">
    <property type="entry name" value="Zinc finger protein 33A"/>
    <property type="match status" value="1"/>
</dbReference>
<dbReference type="FunFam" id="3.30.160.60:FF:000387">
    <property type="entry name" value="Zinc finger protein 354A"/>
    <property type="match status" value="1"/>
</dbReference>
<dbReference type="FunFam" id="3.30.160.60:FF:000135">
    <property type="entry name" value="Zinc finger protein 358"/>
    <property type="match status" value="1"/>
</dbReference>
<dbReference type="FunFam" id="3.30.160.60:FF:000200">
    <property type="entry name" value="zinc finger protein 510 isoform X2"/>
    <property type="match status" value="1"/>
</dbReference>
<dbReference type="FunFam" id="3.30.160.60:FF:001697">
    <property type="entry name" value="zinc finger protein 623"/>
    <property type="match status" value="1"/>
</dbReference>
<dbReference type="Gene3D" id="6.10.140.140">
    <property type="match status" value="1"/>
</dbReference>
<dbReference type="Gene3D" id="3.30.160.60">
    <property type="entry name" value="Classic Zinc Finger"/>
    <property type="match status" value="13"/>
</dbReference>
<dbReference type="InterPro" id="IPR050752">
    <property type="entry name" value="C2H2-ZF_domain"/>
</dbReference>
<dbReference type="InterPro" id="IPR001909">
    <property type="entry name" value="KRAB"/>
</dbReference>
<dbReference type="InterPro" id="IPR036051">
    <property type="entry name" value="KRAB_dom_sf"/>
</dbReference>
<dbReference type="InterPro" id="IPR036236">
    <property type="entry name" value="Znf_C2H2_sf"/>
</dbReference>
<dbReference type="InterPro" id="IPR013087">
    <property type="entry name" value="Znf_C2H2_type"/>
</dbReference>
<dbReference type="PANTHER" id="PTHR24384">
    <property type="entry name" value="FINGER PUTATIVE TRANSCRIPTION FACTOR FAMILY-RELATED"/>
    <property type="match status" value="1"/>
</dbReference>
<dbReference type="PANTHER" id="PTHR24384:SF242">
    <property type="entry name" value="ZINC FINGER PROTEIN 628"/>
    <property type="match status" value="1"/>
</dbReference>
<dbReference type="Pfam" id="PF01352">
    <property type="entry name" value="KRAB"/>
    <property type="match status" value="1"/>
</dbReference>
<dbReference type="Pfam" id="PF00096">
    <property type="entry name" value="zf-C2H2"/>
    <property type="match status" value="13"/>
</dbReference>
<dbReference type="SMART" id="SM00349">
    <property type="entry name" value="KRAB"/>
    <property type="match status" value="1"/>
</dbReference>
<dbReference type="SMART" id="SM00355">
    <property type="entry name" value="ZnF_C2H2"/>
    <property type="match status" value="13"/>
</dbReference>
<dbReference type="SUPFAM" id="SSF57667">
    <property type="entry name" value="beta-beta-alpha zinc fingers"/>
    <property type="match status" value="7"/>
</dbReference>
<dbReference type="SUPFAM" id="SSF109640">
    <property type="entry name" value="KRAB domain (Kruppel-associated box)"/>
    <property type="match status" value="1"/>
</dbReference>
<dbReference type="PROSITE" id="PS50805">
    <property type="entry name" value="KRAB"/>
    <property type="match status" value="1"/>
</dbReference>
<dbReference type="PROSITE" id="PS00028">
    <property type="entry name" value="ZINC_FINGER_C2H2_1"/>
    <property type="match status" value="13"/>
</dbReference>
<dbReference type="PROSITE" id="PS50157">
    <property type="entry name" value="ZINC_FINGER_C2H2_2"/>
    <property type="match status" value="13"/>
</dbReference>
<sequence>MAAAGLLPLPAAPQAKVTFEDVAVLLSQEEWARLGPAQRGLYRHVMMETYGNVVSLGLPGSKPVVISQLERGEDPWVLDGQGTELSQSLGSDHSECKAKEENQNTDLNVPPLISDEASATLTETPLRKVAEERYKTEPKVCPSPKPIGPQNAHGLNPSVPVARPQTAPSVERPYICIECGKCFGRSSHLLQHQRIHTGEKPYVCHVCGKAFSQSSVLSKHRRIHTGEKPYECNECGKAFRVSSDLAQHHKIHTGEKPHECLECGKAFTQLSHLIQHQRIHTGERPYVCPLCGKAFNHSTVLRSHQRVHTGEKPHGCSECGKTFSVKRTLLQHQRVHTGEKPYTCSECGKAFSDRSVLIQHHNVHTGEKPYECSECGKTFSHRSTLMNHERIHTQEKPYACYECGKAFVQHSHLIQHQRVHTGEKPYVCGECGHAFSARRSLIQHERIHTGEKPFQCTECGKAFSLKATLIVHLRTHTGEKPYECNSCGKAFSQYSVLIQHQRIHTGEKPYECGECGRAFNQHGHLIQHQKVHKKL</sequence>
<proteinExistence type="evidence at transcript level"/>